<feature type="signal peptide" evidence="2">
    <location>
        <begin position="1"/>
        <end position="21"/>
    </location>
</feature>
<feature type="chain" id="PRO_0000325921" description="WW domain binding protein VOPP1">
    <location>
        <begin position="22"/>
        <end position="167"/>
    </location>
</feature>
<feature type="topological domain" description="Extracellular" evidence="2">
    <location>
        <begin position="22"/>
        <end position="59"/>
    </location>
</feature>
<feature type="transmembrane region" description="Helical" evidence="2">
    <location>
        <begin position="60"/>
        <end position="80"/>
    </location>
</feature>
<feature type="topological domain" description="Cytoplasmic" evidence="2">
    <location>
        <begin position="81"/>
        <end position="167"/>
    </location>
</feature>
<feature type="region of interest" description="Disordered" evidence="3">
    <location>
        <begin position="101"/>
        <end position="167"/>
    </location>
</feature>
<feature type="compositionally biased region" description="Pro residues" evidence="3">
    <location>
        <begin position="104"/>
        <end position="113"/>
    </location>
</feature>
<feature type="compositionally biased region" description="Pro residues" evidence="3">
    <location>
        <begin position="140"/>
        <end position="159"/>
    </location>
</feature>
<name>VOPP1_XENTR</name>
<reference key="1">
    <citation type="submission" date="2006-08" db="EMBL/GenBank/DDBJ databases">
        <authorList>
            <consortium name="NIH - Xenopus Gene Collection (XGC) project"/>
        </authorList>
    </citation>
    <scope>NUCLEOTIDE SEQUENCE [LARGE SCALE MRNA]</scope>
    <source>
        <strain>N6</strain>
        <tissue>Stomach</tissue>
    </source>
</reference>
<sequence>MKSLHCVGLYLLSLLCEFTEAKKHCWYFEGLYPTYYICRAYEDCCGSRCCVRALSIQRLWYFWFLLMMGVLFCCGAGFFIRRRMYPPLLVDEPTFNVSYTRQPAGPPPGPQHPGMPYYSDPGGAMGNPVTPSFHVQPSPQGNPPFPPPPSYCNTPPPPYEQVVKSCK</sequence>
<proteinExistence type="evidence at transcript level"/>
<accession>Q0V9A8</accession>
<keyword id="KW-0968">Cytoplasmic vesicle</keyword>
<keyword id="KW-0967">Endosome</keyword>
<keyword id="KW-0458">Lysosome</keyword>
<keyword id="KW-0472">Membrane</keyword>
<keyword id="KW-1185">Reference proteome</keyword>
<keyword id="KW-0732">Signal</keyword>
<keyword id="KW-0804">Transcription</keyword>
<keyword id="KW-0805">Transcription regulation</keyword>
<keyword id="KW-0812">Transmembrane</keyword>
<keyword id="KW-1133">Transmembrane helix</keyword>
<gene>
    <name type="primary">vopp1</name>
    <name type="synonym">ecop</name>
</gene>
<organism>
    <name type="scientific">Xenopus tropicalis</name>
    <name type="common">Western clawed frog</name>
    <name type="synonym">Silurana tropicalis</name>
    <dbReference type="NCBI Taxonomy" id="8364"/>
    <lineage>
        <taxon>Eukaryota</taxon>
        <taxon>Metazoa</taxon>
        <taxon>Chordata</taxon>
        <taxon>Craniata</taxon>
        <taxon>Vertebrata</taxon>
        <taxon>Euteleostomi</taxon>
        <taxon>Amphibia</taxon>
        <taxon>Batrachia</taxon>
        <taxon>Anura</taxon>
        <taxon>Pipoidea</taxon>
        <taxon>Pipidae</taxon>
        <taxon>Xenopodinae</taxon>
        <taxon>Xenopus</taxon>
        <taxon>Silurana</taxon>
    </lineage>
</organism>
<evidence type="ECO:0000250" key="1">
    <source>
        <dbReference type="UniProtKB" id="Q96AW1"/>
    </source>
</evidence>
<evidence type="ECO:0000255" key="2"/>
<evidence type="ECO:0000256" key="3">
    <source>
        <dbReference type="SAM" id="MobiDB-lite"/>
    </source>
</evidence>
<evidence type="ECO:0000305" key="4"/>
<dbReference type="EMBL" id="BC121667">
    <property type="protein sequence ID" value="AAI21668.1"/>
    <property type="molecule type" value="mRNA"/>
</dbReference>
<dbReference type="RefSeq" id="NP_001072426.1">
    <property type="nucleotide sequence ID" value="NM_001078958.1"/>
</dbReference>
<dbReference type="FunCoup" id="Q0V9A8">
    <property type="interactions" value="140"/>
</dbReference>
<dbReference type="STRING" id="8364.ENSXETP00000027901"/>
<dbReference type="PaxDb" id="8364-ENSXETP00000057511"/>
<dbReference type="DNASU" id="779880"/>
<dbReference type="GeneID" id="779880"/>
<dbReference type="KEGG" id="xtr:779880"/>
<dbReference type="AGR" id="Xenbase:XB-GENE-5807279"/>
<dbReference type="CTD" id="81552"/>
<dbReference type="Xenbase" id="XB-GENE-5807279">
    <property type="gene designation" value="vopp1"/>
</dbReference>
<dbReference type="eggNOG" id="ENOG502RYIF">
    <property type="taxonomic scope" value="Eukaryota"/>
</dbReference>
<dbReference type="HOGENOM" id="CLU_1694909_0_0_1"/>
<dbReference type="InParanoid" id="Q0V9A8"/>
<dbReference type="OrthoDB" id="6629737at2759"/>
<dbReference type="TreeFam" id="TF332098"/>
<dbReference type="Proteomes" id="UP000008143">
    <property type="component" value="Chromosome 6"/>
</dbReference>
<dbReference type="Bgee" id="ENSXETG00000027607">
    <property type="expression patterns" value="Expressed in brain and 13 other cell types or tissues"/>
</dbReference>
<dbReference type="GO" id="GO:0030659">
    <property type="term" value="C:cytoplasmic vesicle membrane"/>
    <property type="evidence" value="ECO:0000250"/>
    <property type="project" value="UniProtKB"/>
</dbReference>
<dbReference type="GO" id="GO:0031902">
    <property type="term" value="C:late endosome membrane"/>
    <property type="evidence" value="ECO:0007669"/>
    <property type="project" value="UniProtKB-SubCell"/>
</dbReference>
<dbReference type="GO" id="GO:0005765">
    <property type="term" value="C:lysosomal membrane"/>
    <property type="evidence" value="ECO:0007669"/>
    <property type="project" value="UniProtKB-SubCell"/>
</dbReference>
<dbReference type="GO" id="GO:0031090">
    <property type="term" value="C:organelle membrane"/>
    <property type="evidence" value="ECO:0000250"/>
    <property type="project" value="UniProtKB"/>
</dbReference>
<dbReference type="InterPro" id="IPR026229">
    <property type="entry name" value="VOPP1"/>
</dbReference>
<dbReference type="PANTHER" id="PTHR14971">
    <property type="entry name" value="VESICULAR, OVEREXPRESSED IN CANCER, PROSURVIVAL PROTEIN 1"/>
    <property type="match status" value="1"/>
</dbReference>
<dbReference type="PANTHER" id="PTHR14971:SF2">
    <property type="entry name" value="VESICULAR, OVEREXPRESSED IN CANCER, PROSURVIVAL PROTEIN 1"/>
    <property type="match status" value="1"/>
</dbReference>
<dbReference type="PRINTS" id="PR02068">
    <property type="entry name" value="VOPPROTEIN1"/>
</dbReference>
<comment type="function">
    <text evidence="1">May be involved in the transcriptional activity of NFKB1. May regulate WWOX role as tumor suppressor.</text>
</comment>
<comment type="subcellular location">
    <subcellularLocation>
        <location evidence="1">Cytoplasmic vesicle membrane</location>
        <topology evidence="1">Single-pass type I membrane protein</topology>
    </subcellularLocation>
    <subcellularLocation>
        <location evidence="1">Late endosome membrane</location>
        <topology evidence="1">Single-pass membrane protein</topology>
    </subcellularLocation>
    <subcellularLocation>
        <location evidence="1">Lysosome membrane</location>
        <topology evidence="1">Single-pass membrane protein</topology>
    </subcellularLocation>
    <text evidence="1">When overexpressed, localizes in the nucleus and perinuclear regions.</text>
</comment>
<comment type="similarity">
    <text evidence="4">Belongs to the VOPP1/ECOP family.</text>
</comment>
<protein>
    <recommendedName>
        <fullName evidence="4">WW domain binding protein VOPP1</fullName>
    </recommendedName>
    <alternativeName>
        <fullName>EGFR-coamplified and overexpressed protein homolog</fullName>
        <shortName>ECop</shortName>
    </alternativeName>
    <alternativeName>
        <fullName>Vesicular, overexpressed in cancer, prosurvival protein 1</fullName>
    </alternativeName>
</protein>